<feature type="chain" id="PRO_0000211309" description="Translationally-controlled tumor protein homolog">
    <location>
        <begin position="1"/>
        <end position="168"/>
    </location>
</feature>
<feature type="domain" description="TCTP" evidence="2">
    <location>
        <begin position="1"/>
        <end position="168"/>
    </location>
</feature>
<protein>
    <recommendedName>
        <fullName>Translationally-controlled tumor protein homolog</fullName>
        <shortName>TCTP</shortName>
    </recommendedName>
</protein>
<dbReference type="EMBL" id="AF107842">
    <property type="protein sequence ID" value="AAD42049.1"/>
    <property type="molecule type" value="mRNA"/>
</dbReference>
<dbReference type="SMR" id="Q9XHL7"/>
<dbReference type="STRING" id="4097.Q9XHL7"/>
<dbReference type="PaxDb" id="4097-Q9XHL7"/>
<dbReference type="Proteomes" id="UP000084051">
    <property type="component" value="Unplaced"/>
</dbReference>
<dbReference type="GO" id="GO:0005737">
    <property type="term" value="C:cytoplasm"/>
    <property type="evidence" value="ECO:0000318"/>
    <property type="project" value="GO_Central"/>
</dbReference>
<dbReference type="GO" id="GO:0005509">
    <property type="term" value="F:calcium ion binding"/>
    <property type="evidence" value="ECO:0000318"/>
    <property type="project" value="GO_Central"/>
</dbReference>
<dbReference type="FunFam" id="2.170.150.10:FF:000003">
    <property type="entry name" value="Translationally-controlled tumor protein homolog"/>
    <property type="match status" value="1"/>
</dbReference>
<dbReference type="Gene3D" id="2.170.150.10">
    <property type="entry name" value="Metal Binding Protein, Guanine Nucleotide Exchange Factor, Chain A"/>
    <property type="match status" value="1"/>
</dbReference>
<dbReference type="InterPro" id="IPR011057">
    <property type="entry name" value="Mss4-like_sf"/>
</dbReference>
<dbReference type="InterPro" id="IPR011323">
    <property type="entry name" value="Mss4/transl-control_tumour"/>
</dbReference>
<dbReference type="InterPro" id="IPR034737">
    <property type="entry name" value="TCTP"/>
</dbReference>
<dbReference type="InterPro" id="IPR018103">
    <property type="entry name" value="Translation_control_tumour_CS"/>
</dbReference>
<dbReference type="InterPro" id="IPR018105">
    <property type="entry name" value="Translational_control_tumour_p"/>
</dbReference>
<dbReference type="PANTHER" id="PTHR11991">
    <property type="entry name" value="TRANSLATIONALLY CONTROLLED TUMOR PROTEIN-RELATED"/>
    <property type="match status" value="1"/>
</dbReference>
<dbReference type="PANTHER" id="PTHR11991:SF0">
    <property type="entry name" value="TRANSLATIONALLY-CONTROLLED TUMOR PROTEIN"/>
    <property type="match status" value="1"/>
</dbReference>
<dbReference type="Pfam" id="PF00838">
    <property type="entry name" value="TCTP"/>
    <property type="match status" value="1"/>
</dbReference>
<dbReference type="PRINTS" id="PR01653">
    <property type="entry name" value="TCTPROTEIN"/>
</dbReference>
<dbReference type="SUPFAM" id="SSF51316">
    <property type="entry name" value="Mss4-like"/>
    <property type="match status" value="1"/>
</dbReference>
<dbReference type="PROSITE" id="PS01002">
    <property type="entry name" value="TCTP_1"/>
    <property type="match status" value="1"/>
</dbReference>
<dbReference type="PROSITE" id="PS01003">
    <property type="entry name" value="TCTP_2"/>
    <property type="match status" value="1"/>
</dbReference>
<dbReference type="PROSITE" id="PS51797">
    <property type="entry name" value="TCTP_3"/>
    <property type="match status" value="1"/>
</dbReference>
<name>TCTP_TOBAC</name>
<proteinExistence type="evidence at transcript level"/>
<reference key="1">
    <citation type="submission" date="1998-11" db="EMBL/GenBank/DDBJ databases">
        <title>Isolation of cDNA clone encoding a putative translationally controlled tumor protein homolog in Nicotiana tabacum.</title>
        <authorList>
            <person name="Kang J.-G."/>
            <person name="Park C.-M."/>
        </authorList>
    </citation>
    <scope>NUCLEOTIDE SEQUENCE [MRNA]</scope>
    <source>
        <strain>cv. Petit Havana SR1</strain>
        <tissue>Leaf</tissue>
    </source>
</reference>
<evidence type="ECO:0000250" key="1"/>
<evidence type="ECO:0000255" key="2">
    <source>
        <dbReference type="PROSITE-ProRule" id="PRU01133"/>
    </source>
</evidence>
<sequence>MLVYQDLLSGDELPSDSFSYTELGNGVLWEVQGKWVVQGAVDVNIGANPSAEGADEDEGVDDQAIKVVDIVDTFRLQEQPSFDKKQFVAYMKKYIKNLTPKLGAEQEEVFKNNIQGATKYLLSKLSDLQFFVGESMADDTGMVFAYYKDGATDPTFLYLAHGLKEVKC</sequence>
<accession>Q9XHL7</accession>
<comment type="function">
    <text evidence="1">Involved in calcium binding and microtubule stabilization.</text>
</comment>
<comment type="subcellular location">
    <subcellularLocation>
        <location evidence="1">Cytoplasm</location>
    </subcellularLocation>
</comment>
<comment type="induction">
    <text>Expression is highly induced in the dark.</text>
</comment>
<comment type="similarity">
    <text evidence="2">Belongs to the TCTP family.</text>
</comment>
<keyword id="KW-0106">Calcium</keyword>
<keyword id="KW-0963">Cytoplasm</keyword>
<keyword id="KW-1185">Reference proteome</keyword>
<gene>
    <name type="primary">TCTP</name>
    <name type="synonym">TCTP1</name>
</gene>
<organism>
    <name type="scientific">Nicotiana tabacum</name>
    <name type="common">Common tobacco</name>
    <dbReference type="NCBI Taxonomy" id="4097"/>
    <lineage>
        <taxon>Eukaryota</taxon>
        <taxon>Viridiplantae</taxon>
        <taxon>Streptophyta</taxon>
        <taxon>Embryophyta</taxon>
        <taxon>Tracheophyta</taxon>
        <taxon>Spermatophyta</taxon>
        <taxon>Magnoliopsida</taxon>
        <taxon>eudicotyledons</taxon>
        <taxon>Gunneridae</taxon>
        <taxon>Pentapetalae</taxon>
        <taxon>asterids</taxon>
        <taxon>lamiids</taxon>
        <taxon>Solanales</taxon>
        <taxon>Solanaceae</taxon>
        <taxon>Nicotianoideae</taxon>
        <taxon>Nicotianeae</taxon>
        <taxon>Nicotiana</taxon>
    </lineage>
</organism>